<sequence>MKNVTDSFVSLGHWPFAGSFGFNTDILATNLINLSVVLGVLIFFGKGVLSDLLDNRKQRIWSTIRNSDELREVAIEQLEKARARLRKVEREADEFRVNGYSEIEREKWNLINATYENLERLENYKNETIHFEQQRAINQVRQRVFQQALQGALGTLNSRSNSELHLRTISANIGMLGAMKEITD</sequence>
<feature type="chain" id="PRO_0000368911" description="ATP synthase subunit b, chloroplastic">
    <location>
        <begin position="1"/>
        <end position="184"/>
    </location>
</feature>
<feature type="transmembrane region" description="Helical" evidence="1">
    <location>
        <begin position="26"/>
        <end position="48"/>
    </location>
</feature>
<proteinExistence type="inferred from homology"/>
<evidence type="ECO:0000255" key="1">
    <source>
        <dbReference type="HAMAP-Rule" id="MF_01398"/>
    </source>
</evidence>
<protein>
    <recommendedName>
        <fullName evidence="1">ATP synthase subunit b, chloroplastic</fullName>
    </recommendedName>
    <alternativeName>
        <fullName evidence="1">ATP synthase F(0) sector subunit b</fullName>
    </alternativeName>
    <alternativeName>
        <fullName evidence="1">ATPase subunit I</fullName>
    </alternativeName>
</protein>
<accession>Q7YJY3</accession>
<keyword id="KW-0066">ATP synthesis</keyword>
<keyword id="KW-0138">CF(0)</keyword>
<keyword id="KW-0150">Chloroplast</keyword>
<keyword id="KW-0375">Hydrogen ion transport</keyword>
<keyword id="KW-0406">Ion transport</keyword>
<keyword id="KW-0472">Membrane</keyword>
<keyword id="KW-0934">Plastid</keyword>
<keyword id="KW-0793">Thylakoid</keyword>
<keyword id="KW-0812">Transmembrane</keyword>
<keyword id="KW-1133">Transmembrane helix</keyword>
<keyword id="KW-0813">Transport</keyword>
<organism>
    <name type="scientific">Calycanthus floridus var. glaucus</name>
    <name type="common">Eastern sweetshrub</name>
    <name type="synonym">Calycanthus fertilis var. ferax</name>
    <dbReference type="NCBI Taxonomy" id="212734"/>
    <lineage>
        <taxon>Eukaryota</taxon>
        <taxon>Viridiplantae</taxon>
        <taxon>Streptophyta</taxon>
        <taxon>Embryophyta</taxon>
        <taxon>Tracheophyta</taxon>
        <taxon>Spermatophyta</taxon>
        <taxon>Magnoliopsida</taxon>
        <taxon>Magnoliidae</taxon>
        <taxon>Laurales</taxon>
        <taxon>Calycanthaceae</taxon>
        <taxon>Calycanthus</taxon>
    </lineage>
</organism>
<reference key="1">
    <citation type="journal article" date="2003" name="Plant Syst. Evol.">
        <title>The chloroplast genome of the 'basal' angiosperm Calycanthus fertilis -- structural and phylogenetic analyses.</title>
        <authorList>
            <person name="Goremykin V.V."/>
            <person name="Hirsch-Ernst K.I."/>
            <person name="Woelfl S."/>
            <person name="Hellwig F.H."/>
        </authorList>
    </citation>
    <scope>NUCLEOTIDE SEQUENCE [LARGE SCALE GENOMIC DNA]</scope>
</reference>
<geneLocation type="chloroplast"/>
<gene>
    <name evidence="1" type="primary">atpF</name>
</gene>
<dbReference type="EMBL" id="AJ428413">
    <property type="protein sequence ID" value="CAD28707.1"/>
    <property type="molecule type" value="Genomic_DNA"/>
</dbReference>
<dbReference type="RefSeq" id="NP_862740.1">
    <property type="nucleotide sequence ID" value="NC_004993.1"/>
</dbReference>
<dbReference type="SMR" id="Q7YJY3"/>
<dbReference type="GeneID" id="2597977"/>
<dbReference type="GO" id="GO:0009535">
    <property type="term" value="C:chloroplast thylakoid membrane"/>
    <property type="evidence" value="ECO:0007669"/>
    <property type="project" value="UniProtKB-SubCell"/>
</dbReference>
<dbReference type="GO" id="GO:0045259">
    <property type="term" value="C:proton-transporting ATP synthase complex"/>
    <property type="evidence" value="ECO:0007669"/>
    <property type="project" value="UniProtKB-KW"/>
</dbReference>
<dbReference type="GO" id="GO:0046933">
    <property type="term" value="F:proton-transporting ATP synthase activity, rotational mechanism"/>
    <property type="evidence" value="ECO:0007669"/>
    <property type="project" value="UniProtKB-UniRule"/>
</dbReference>
<dbReference type="CDD" id="cd06503">
    <property type="entry name" value="ATP-synt_Fo_b"/>
    <property type="match status" value="1"/>
</dbReference>
<dbReference type="HAMAP" id="MF_01398">
    <property type="entry name" value="ATP_synth_b_bprime"/>
    <property type="match status" value="1"/>
</dbReference>
<dbReference type="InterPro" id="IPR002146">
    <property type="entry name" value="ATP_synth_b/b'su_bac/chlpt"/>
</dbReference>
<dbReference type="PANTHER" id="PTHR34264">
    <property type="entry name" value="ATP SYNTHASE SUBUNIT B, CHLOROPLASTIC"/>
    <property type="match status" value="1"/>
</dbReference>
<dbReference type="PANTHER" id="PTHR34264:SF3">
    <property type="entry name" value="ATP SYNTHASE SUBUNIT B, CHLOROPLASTIC"/>
    <property type="match status" value="1"/>
</dbReference>
<dbReference type="Pfam" id="PF00430">
    <property type="entry name" value="ATP-synt_B"/>
    <property type="match status" value="1"/>
</dbReference>
<comment type="function">
    <text evidence="1">F(1)F(0) ATP synthase produces ATP from ADP in the presence of a proton or sodium gradient. F-type ATPases consist of two structural domains, F(1) containing the extramembraneous catalytic core and F(0) containing the membrane proton channel, linked together by a central stalk and a peripheral stalk. During catalysis, ATP synthesis in the catalytic domain of F(1) is coupled via a rotary mechanism of the central stalk subunits to proton translocation.</text>
</comment>
<comment type="function">
    <text evidence="1">Component of the F(0) channel, it forms part of the peripheral stalk, linking F(1) to F(0).</text>
</comment>
<comment type="subunit">
    <text evidence="1">F-type ATPases have 2 components, F(1) - the catalytic core - and F(0) - the membrane proton channel. F(1) has five subunits: alpha(3), beta(3), gamma(1), delta(1), epsilon(1). F(0) has four main subunits: a(1), b(1), b'(1) and c(10-14). The alpha and beta chains form an alternating ring which encloses part of the gamma chain. F(1) is attached to F(0) by a central stalk formed by the gamma and epsilon chains, while a peripheral stalk is formed by the delta, b and b' chains.</text>
</comment>
<comment type="subcellular location">
    <subcellularLocation>
        <location evidence="1">Plastid</location>
        <location evidence="1">Chloroplast thylakoid membrane</location>
        <topology evidence="1">Single-pass membrane protein</topology>
    </subcellularLocation>
</comment>
<comment type="miscellaneous">
    <text>In plastids the F-type ATPase is also known as CF(1)CF(0).</text>
</comment>
<comment type="similarity">
    <text evidence="1">Belongs to the ATPase B chain family.</text>
</comment>
<name>ATPF_CALFG</name>